<protein>
    <recommendedName>
        <fullName>von Willebrand factor A domain-containing protein 1</fullName>
    </recommendedName>
    <alternativeName>
        <fullName>von Willebrand factor A domain-related protein</fullName>
    </alternativeName>
</protein>
<proteinExistence type="evidence at protein level"/>
<reference key="1">
    <citation type="journal article" date="2002" name="FEBS Lett.">
        <title>WARP is a new member of the von Willebrand factor A-domain superfamily of extracellular matrix proteins.</title>
        <authorList>
            <person name="Fitzgerald J."/>
            <person name="Tay Ting S."/>
            <person name="Bateman J.F."/>
        </authorList>
    </citation>
    <scope>NUCLEOTIDE SEQUENCE [MRNA] (ISOFORM 1)</scope>
    <scope>SUBUNIT</scope>
    <scope>GLYCOSYLATION</scope>
    <scope>DISULFIDE BOND</scope>
    <scope>SUBCELLULAR LOCATION</scope>
    <scope>TISSUE SPECIFICITY</scope>
</reference>
<reference key="2">
    <citation type="journal article" date="2005" name="Science">
        <title>The transcriptional landscape of the mammalian genome.</title>
        <authorList>
            <person name="Carninci P."/>
            <person name="Kasukawa T."/>
            <person name="Katayama S."/>
            <person name="Gough J."/>
            <person name="Frith M.C."/>
            <person name="Maeda N."/>
            <person name="Oyama R."/>
            <person name="Ravasi T."/>
            <person name="Lenhard B."/>
            <person name="Wells C."/>
            <person name="Kodzius R."/>
            <person name="Shimokawa K."/>
            <person name="Bajic V.B."/>
            <person name="Brenner S.E."/>
            <person name="Batalov S."/>
            <person name="Forrest A.R."/>
            <person name="Zavolan M."/>
            <person name="Davis M.J."/>
            <person name="Wilming L.G."/>
            <person name="Aidinis V."/>
            <person name="Allen J.E."/>
            <person name="Ambesi-Impiombato A."/>
            <person name="Apweiler R."/>
            <person name="Aturaliya R.N."/>
            <person name="Bailey T.L."/>
            <person name="Bansal M."/>
            <person name="Baxter L."/>
            <person name="Beisel K.W."/>
            <person name="Bersano T."/>
            <person name="Bono H."/>
            <person name="Chalk A.M."/>
            <person name="Chiu K.P."/>
            <person name="Choudhary V."/>
            <person name="Christoffels A."/>
            <person name="Clutterbuck D.R."/>
            <person name="Crowe M.L."/>
            <person name="Dalla E."/>
            <person name="Dalrymple B.P."/>
            <person name="de Bono B."/>
            <person name="Della Gatta G."/>
            <person name="di Bernardo D."/>
            <person name="Down T."/>
            <person name="Engstrom P."/>
            <person name="Fagiolini M."/>
            <person name="Faulkner G."/>
            <person name="Fletcher C.F."/>
            <person name="Fukushima T."/>
            <person name="Furuno M."/>
            <person name="Futaki S."/>
            <person name="Gariboldi M."/>
            <person name="Georgii-Hemming P."/>
            <person name="Gingeras T.R."/>
            <person name="Gojobori T."/>
            <person name="Green R.E."/>
            <person name="Gustincich S."/>
            <person name="Harbers M."/>
            <person name="Hayashi Y."/>
            <person name="Hensch T.K."/>
            <person name="Hirokawa N."/>
            <person name="Hill D."/>
            <person name="Huminiecki L."/>
            <person name="Iacono M."/>
            <person name="Ikeo K."/>
            <person name="Iwama A."/>
            <person name="Ishikawa T."/>
            <person name="Jakt M."/>
            <person name="Kanapin A."/>
            <person name="Katoh M."/>
            <person name="Kawasawa Y."/>
            <person name="Kelso J."/>
            <person name="Kitamura H."/>
            <person name="Kitano H."/>
            <person name="Kollias G."/>
            <person name="Krishnan S.P."/>
            <person name="Kruger A."/>
            <person name="Kummerfeld S.K."/>
            <person name="Kurochkin I.V."/>
            <person name="Lareau L.F."/>
            <person name="Lazarevic D."/>
            <person name="Lipovich L."/>
            <person name="Liu J."/>
            <person name="Liuni S."/>
            <person name="McWilliam S."/>
            <person name="Madan Babu M."/>
            <person name="Madera M."/>
            <person name="Marchionni L."/>
            <person name="Matsuda H."/>
            <person name="Matsuzawa S."/>
            <person name="Miki H."/>
            <person name="Mignone F."/>
            <person name="Miyake S."/>
            <person name="Morris K."/>
            <person name="Mottagui-Tabar S."/>
            <person name="Mulder N."/>
            <person name="Nakano N."/>
            <person name="Nakauchi H."/>
            <person name="Ng P."/>
            <person name="Nilsson R."/>
            <person name="Nishiguchi S."/>
            <person name="Nishikawa S."/>
            <person name="Nori F."/>
            <person name="Ohara O."/>
            <person name="Okazaki Y."/>
            <person name="Orlando V."/>
            <person name="Pang K.C."/>
            <person name="Pavan W.J."/>
            <person name="Pavesi G."/>
            <person name="Pesole G."/>
            <person name="Petrovsky N."/>
            <person name="Piazza S."/>
            <person name="Reed J."/>
            <person name="Reid J.F."/>
            <person name="Ring B.Z."/>
            <person name="Ringwald M."/>
            <person name="Rost B."/>
            <person name="Ruan Y."/>
            <person name="Salzberg S.L."/>
            <person name="Sandelin A."/>
            <person name="Schneider C."/>
            <person name="Schoenbach C."/>
            <person name="Sekiguchi K."/>
            <person name="Semple C.A."/>
            <person name="Seno S."/>
            <person name="Sessa L."/>
            <person name="Sheng Y."/>
            <person name="Shibata Y."/>
            <person name="Shimada H."/>
            <person name="Shimada K."/>
            <person name="Silva D."/>
            <person name="Sinclair B."/>
            <person name="Sperling S."/>
            <person name="Stupka E."/>
            <person name="Sugiura K."/>
            <person name="Sultana R."/>
            <person name="Takenaka Y."/>
            <person name="Taki K."/>
            <person name="Tammoja K."/>
            <person name="Tan S.L."/>
            <person name="Tang S."/>
            <person name="Taylor M.S."/>
            <person name="Tegner J."/>
            <person name="Teichmann S.A."/>
            <person name="Ueda H.R."/>
            <person name="van Nimwegen E."/>
            <person name="Verardo R."/>
            <person name="Wei C.L."/>
            <person name="Yagi K."/>
            <person name="Yamanishi H."/>
            <person name="Zabarovsky E."/>
            <person name="Zhu S."/>
            <person name="Zimmer A."/>
            <person name="Hide W."/>
            <person name="Bult C."/>
            <person name="Grimmond S.M."/>
            <person name="Teasdale R.D."/>
            <person name="Liu E.T."/>
            <person name="Brusic V."/>
            <person name="Quackenbush J."/>
            <person name="Wahlestedt C."/>
            <person name="Mattick J.S."/>
            <person name="Hume D.A."/>
            <person name="Kai C."/>
            <person name="Sasaki D."/>
            <person name="Tomaru Y."/>
            <person name="Fukuda S."/>
            <person name="Kanamori-Katayama M."/>
            <person name="Suzuki M."/>
            <person name="Aoki J."/>
            <person name="Arakawa T."/>
            <person name="Iida J."/>
            <person name="Imamura K."/>
            <person name="Itoh M."/>
            <person name="Kato T."/>
            <person name="Kawaji H."/>
            <person name="Kawagashira N."/>
            <person name="Kawashima T."/>
            <person name="Kojima M."/>
            <person name="Kondo S."/>
            <person name="Konno H."/>
            <person name="Nakano K."/>
            <person name="Ninomiya N."/>
            <person name="Nishio T."/>
            <person name="Okada M."/>
            <person name="Plessy C."/>
            <person name="Shibata K."/>
            <person name="Shiraki T."/>
            <person name="Suzuki S."/>
            <person name="Tagami M."/>
            <person name="Waki K."/>
            <person name="Watahiki A."/>
            <person name="Okamura-Oho Y."/>
            <person name="Suzuki H."/>
            <person name="Kawai J."/>
            <person name="Hayashizaki Y."/>
        </authorList>
    </citation>
    <scope>NUCLEOTIDE SEQUENCE [LARGE SCALE MRNA] (ISOFORM 1)</scope>
    <source>
        <strain>C57BL/6J</strain>
        <tissue>Ovary</tissue>
        <tissue>Testis</tissue>
        <tissue>Uterus</tissue>
    </source>
</reference>
<reference key="3">
    <citation type="journal article" date="2009" name="PLoS Biol.">
        <title>Lineage-specific biology revealed by a finished genome assembly of the mouse.</title>
        <authorList>
            <person name="Church D.M."/>
            <person name="Goodstadt L."/>
            <person name="Hillier L.W."/>
            <person name="Zody M.C."/>
            <person name="Goldstein S."/>
            <person name="She X."/>
            <person name="Bult C.J."/>
            <person name="Agarwala R."/>
            <person name="Cherry J.L."/>
            <person name="DiCuccio M."/>
            <person name="Hlavina W."/>
            <person name="Kapustin Y."/>
            <person name="Meric P."/>
            <person name="Maglott D."/>
            <person name="Birtle Z."/>
            <person name="Marques A.C."/>
            <person name="Graves T."/>
            <person name="Zhou S."/>
            <person name="Teague B."/>
            <person name="Potamousis K."/>
            <person name="Churas C."/>
            <person name="Place M."/>
            <person name="Herschleb J."/>
            <person name="Runnheim R."/>
            <person name="Forrest D."/>
            <person name="Amos-Landgraf J."/>
            <person name="Schwartz D.C."/>
            <person name="Cheng Z."/>
            <person name="Lindblad-Toh K."/>
            <person name="Eichler E.E."/>
            <person name="Ponting C.P."/>
        </authorList>
    </citation>
    <scope>NUCLEOTIDE SEQUENCE [LARGE SCALE GENOMIC DNA]</scope>
    <source>
        <strain>C57BL/6J</strain>
    </source>
</reference>
<reference key="4">
    <citation type="journal article" date="2004" name="Genome Res.">
        <title>The status, quality, and expansion of the NIH full-length cDNA project: the Mammalian Gene Collection (MGC).</title>
        <authorList>
            <consortium name="The MGC Project Team"/>
        </authorList>
    </citation>
    <scope>NUCLEOTIDE SEQUENCE [LARGE SCALE MRNA] (ISOFORMS 1 AND 2)</scope>
    <source>
        <strain>Czech II</strain>
        <strain>FVB/N</strain>
        <tissue>Colon</tissue>
        <tissue>Mammary tumor</tissue>
    </source>
</reference>
<reference key="5">
    <citation type="journal article" date="2006" name="J. Biol. Chem.">
        <title>WARP is a novel multimeric component of the chondrocyte pericellular matrix that interacts with perlecan.</title>
        <authorList>
            <person name="Allen J.M."/>
            <person name="Bateman J.F."/>
            <person name="Hansen U."/>
            <person name="Wilson R."/>
            <person name="Bruckner P."/>
            <person name="Owens R.T."/>
            <person name="Sasaki T."/>
            <person name="Timpl R."/>
            <person name="Fitzgerald J."/>
        </authorList>
    </citation>
    <scope>SUBUNIT</scope>
    <scope>SUBCELLULAR LOCATION</scope>
    <scope>DEVELOPMENTAL STAGE</scope>
    <scope>INTERACTION WITH HSPG2</scope>
    <scope>MUTAGENESIS OF CYS-369 AND CYS-393</scope>
</reference>
<reference key="6">
    <citation type="journal article" date="2008" name="Matrix Biol.">
        <title>The extracellular matrix protein WARP is a novel component of a distinct subset of basement membranes.</title>
        <authorList>
            <person name="Allen J.M."/>
            <person name="Brachvogel B."/>
            <person name="Farlie P.G."/>
            <person name="Fitzgerald J."/>
            <person name="Bateman J.F."/>
        </authorList>
    </citation>
    <scope>TISSUE SPECIFICITY</scope>
    <scope>DEVELOPMENTAL STAGE</scope>
</reference>
<reference key="7">
    <citation type="journal article" date="2008" name="Proc. Natl. Acad. Sci. U.S.A.">
        <title>Transcriptome-based systematic identification of extracellular matrix proteins.</title>
        <authorList>
            <person name="Manabe R."/>
            <person name="Tsutsui K."/>
            <person name="Yamada T."/>
            <person name="Kimura M."/>
            <person name="Nakano I."/>
            <person name="Shimono C."/>
            <person name="Sanzen N."/>
            <person name="Furutani Y."/>
            <person name="Fukuda T."/>
            <person name="Oguri Y."/>
            <person name="Shimamoto K."/>
            <person name="Kiyozumi D."/>
            <person name="Sato Y."/>
            <person name="Sado Y."/>
            <person name="Senoo H."/>
            <person name="Yamashina S."/>
            <person name="Fukuda S."/>
            <person name="Kawai J."/>
            <person name="Sugiura N."/>
            <person name="Kimata K."/>
            <person name="Hayashizaki Y."/>
            <person name="Sekiguchi K."/>
        </authorList>
    </citation>
    <scope>FUNCTION</scope>
    <scope>SUBCELLULAR LOCATION</scope>
    <scope>DEVELOPMENTAL STAGE</scope>
</reference>
<sequence length="415" mass="44709">MLFWTAFSMALSLRLALARSSIERGSTASDPQGDLLFLLDSSASVSHYEFSRVREFVGQLVATMSFGPGALRASLVHVGSQPHTEFTFDQYSSGQAIQDAIRVAPQRMGDTNTGLALAYAKEQLFAEEAGARPGVPKVLVWVTDGGSSDPVGPPMQELKDLGVTIFIVSTGRGNLLELLAAASAPAEKHLHFVDVDDLPIIARELRGSITDAMQPQQLHASEVLSSGFRLSWPPLLTADSGYYVLELVPSGKLATTRRQQLPGNATSWTWTDLDPDTDYEVSLLPESNVHLLRPQHVRVRTLQEEAGPERIVISHARPRSLRVSWAPALGPDSALGYHVQLGPLQGGSLERVEVPAGQNSTTVQGLTPCTTYLVTVTAAFRSGRQRALSAKACTASGARTRAPQSMRPEAGPREP</sequence>
<keyword id="KW-0025">Alternative splicing</keyword>
<keyword id="KW-0084">Basement membrane</keyword>
<keyword id="KW-1015">Disulfide bond</keyword>
<keyword id="KW-0272">Extracellular matrix</keyword>
<keyword id="KW-0325">Glycoprotein</keyword>
<keyword id="KW-0597">Phosphoprotein</keyword>
<keyword id="KW-1185">Reference proteome</keyword>
<keyword id="KW-0677">Repeat</keyword>
<keyword id="KW-0964">Secreted</keyword>
<keyword id="KW-0732">Signal</keyword>
<evidence type="ECO:0000250" key="1">
    <source>
        <dbReference type="UniProtKB" id="E7FF10"/>
    </source>
</evidence>
<evidence type="ECO:0000250" key="2">
    <source>
        <dbReference type="UniProtKB" id="Q6PCB0"/>
    </source>
</evidence>
<evidence type="ECO:0000255" key="3"/>
<evidence type="ECO:0000255" key="4">
    <source>
        <dbReference type="PROSITE-ProRule" id="PRU00219"/>
    </source>
</evidence>
<evidence type="ECO:0000255" key="5">
    <source>
        <dbReference type="PROSITE-ProRule" id="PRU00316"/>
    </source>
</evidence>
<evidence type="ECO:0000256" key="6">
    <source>
        <dbReference type="SAM" id="MobiDB-lite"/>
    </source>
</evidence>
<evidence type="ECO:0000269" key="7">
    <source>
    </source>
</evidence>
<evidence type="ECO:0000269" key="8">
    <source>
    </source>
</evidence>
<evidence type="ECO:0000269" key="9">
    <source>
    </source>
</evidence>
<evidence type="ECO:0000269" key="10">
    <source>
    </source>
</evidence>
<evidence type="ECO:0000303" key="11">
    <source>
    </source>
</evidence>
<evidence type="ECO:0000305" key="12"/>
<name>VWA1_MOUSE</name>
<feature type="signal peptide" evidence="3">
    <location>
        <begin position="1"/>
        <end position="18"/>
    </location>
</feature>
<feature type="chain" id="PRO_0000307157" description="von Willebrand factor A domain-containing protein 1">
    <location>
        <begin position="19"/>
        <end position="415"/>
    </location>
</feature>
<feature type="domain" description="VWFA" evidence="4">
    <location>
        <begin position="34"/>
        <end position="209"/>
    </location>
</feature>
<feature type="domain" description="Fibronectin type-III 1" evidence="5">
    <location>
        <begin position="214"/>
        <end position="305"/>
    </location>
</feature>
<feature type="domain" description="Fibronectin type-III 2" evidence="5">
    <location>
        <begin position="307"/>
        <end position="403"/>
    </location>
</feature>
<feature type="region of interest" description="Disordered" evidence="6">
    <location>
        <begin position="391"/>
        <end position="415"/>
    </location>
</feature>
<feature type="modified residue" description="Phosphoserine" evidence="2">
    <location>
        <position position="74"/>
    </location>
</feature>
<feature type="modified residue" description="Phosphoserine" evidence="2">
    <location>
        <position position="80"/>
    </location>
</feature>
<feature type="modified residue" description="Phosphoserine" evidence="2">
    <location>
        <position position="93"/>
    </location>
</feature>
<feature type="glycosylation site" description="N-linked (GlcNAc...) asparagine" evidence="3">
    <location>
        <position position="264"/>
    </location>
</feature>
<feature type="disulfide bond" evidence="7">
    <location>
        <begin position="369"/>
        <end position="393"/>
    </location>
</feature>
<feature type="splice variant" id="VSP_028618" description="In isoform 2." evidence="11">
    <location>
        <begin position="1"/>
        <end position="212"/>
    </location>
</feature>
<feature type="mutagenesis site" description="No formation of homomultimers. No formation of homodimers; when associated with S-393." evidence="8">
    <original>C</original>
    <variation>S</variation>
    <location>
        <position position="369"/>
    </location>
</feature>
<feature type="mutagenesis site" description="No formation of homomultimers. No formation of homodimers; when associated with S-369." evidence="8">
    <original>C</original>
    <variation>S</variation>
    <location>
        <position position="393"/>
    </location>
</feature>
<feature type="sequence conflict" description="In Ref. 1; AAK38350." evidence="12" ref="1">
    <original>Q</original>
    <variation>R</variation>
    <location>
        <position position="98"/>
    </location>
</feature>
<feature type="sequence conflict" description="In Ref. 2; BAC26739." evidence="12" ref="2">
    <original>V</original>
    <variation>A</variation>
    <location>
        <position position="163"/>
    </location>
</feature>
<accession>Q8R2Z5</accession>
<accession>Q8C0Q7</accession>
<accession>Q8VDV9</accession>
<accession>Q923K3</accession>
<organism>
    <name type="scientific">Mus musculus</name>
    <name type="common">Mouse</name>
    <dbReference type="NCBI Taxonomy" id="10090"/>
    <lineage>
        <taxon>Eukaryota</taxon>
        <taxon>Metazoa</taxon>
        <taxon>Chordata</taxon>
        <taxon>Craniata</taxon>
        <taxon>Vertebrata</taxon>
        <taxon>Euteleostomi</taxon>
        <taxon>Mammalia</taxon>
        <taxon>Eutheria</taxon>
        <taxon>Euarchontoglires</taxon>
        <taxon>Glires</taxon>
        <taxon>Rodentia</taxon>
        <taxon>Myomorpha</taxon>
        <taxon>Muroidea</taxon>
        <taxon>Muridae</taxon>
        <taxon>Murinae</taxon>
        <taxon>Mus</taxon>
        <taxon>Mus</taxon>
    </lineage>
</organism>
<dbReference type="EMBL" id="AY030094">
    <property type="protein sequence ID" value="AAK38350.1"/>
    <property type="molecule type" value="mRNA"/>
</dbReference>
<dbReference type="EMBL" id="AK030019">
    <property type="protein sequence ID" value="BAC26739.1"/>
    <property type="molecule type" value="mRNA"/>
</dbReference>
<dbReference type="EMBL" id="AK077240">
    <property type="protein sequence ID" value="BAC36703.1"/>
    <property type="molecule type" value="mRNA"/>
</dbReference>
<dbReference type="EMBL" id="AL670236">
    <property type="status" value="NOT_ANNOTATED_CDS"/>
    <property type="molecule type" value="Genomic_DNA"/>
</dbReference>
<dbReference type="EMBL" id="BC020136">
    <property type="protein sequence ID" value="AAH20136.1"/>
    <property type="molecule type" value="mRNA"/>
</dbReference>
<dbReference type="EMBL" id="BC026919">
    <property type="protein sequence ID" value="AAH26919.1"/>
    <property type="molecule type" value="mRNA"/>
</dbReference>
<dbReference type="EMBL" id="BC036166">
    <property type="protein sequence ID" value="AAH36166.1"/>
    <property type="molecule type" value="mRNA"/>
</dbReference>
<dbReference type="CCDS" id="CCDS19039.1">
    <molecule id="Q8R2Z5-1"/>
</dbReference>
<dbReference type="RefSeq" id="NP_680085.3">
    <molecule id="Q8R2Z5-1"/>
    <property type="nucleotide sequence ID" value="NM_147776.4"/>
</dbReference>
<dbReference type="RefSeq" id="XP_011248558.1">
    <property type="nucleotide sequence ID" value="XM_011250256.1"/>
</dbReference>
<dbReference type="RefSeq" id="XP_036020027.1">
    <molecule id="Q8R2Z5-2"/>
    <property type="nucleotide sequence ID" value="XM_036164134.1"/>
</dbReference>
<dbReference type="SMR" id="Q8R2Z5"/>
<dbReference type="FunCoup" id="Q8R2Z5">
    <property type="interactions" value="203"/>
</dbReference>
<dbReference type="STRING" id="10090.ENSMUSP00000040405"/>
<dbReference type="GlyCosmos" id="Q8R2Z5">
    <property type="glycosylation" value="1 site, No reported glycans"/>
</dbReference>
<dbReference type="GlyGen" id="Q8R2Z5">
    <property type="glycosylation" value="1 site"/>
</dbReference>
<dbReference type="PhosphoSitePlus" id="Q8R2Z5"/>
<dbReference type="PaxDb" id="10090-ENSMUSP00000040405"/>
<dbReference type="PeptideAtlas" id="Q8R2Z5"/>
<dbReference type="ProteomicsDB" id="275194">
    <molecule id="Q8R2Z5-1"/>
</dbReference>
<dbReference type="ProteomicsDB" id="275195">
    <molecule id="Q8R2Z5-2"/>
</dbReference>
<dbReference type="Antibodypedia" id="26362">
    <property type="antibodies" value="74 antibodies from 22 providers"/>
</dbReference>
<dbReference type="DNASU" id="246228"/>
<dbReference type="Ensembl" id="ENSMUST00000042196.4">
    <molecule id="Q8R2Z5-1"/>
    <property type="protein sequence ID" value="ENSMUSP00000040405.4"/>
    <property type="gene ID" value="ENSMUSG00000042116.4"/>
</dbReference>
<dbReference type="GeneID" id="246228"/>
<dbReference type="KEGG" id="mmu:246228"/>
<dbReference type="UCSC" id="uc008weq.2">
    <molecule id="Q8R2Z5-1"/>
    <property type="organism name" value="mouse"/>
</dbReference>
<dbReference type="AGR" id="MGI:2179729"/>
<dbReference type="CTD" id="64856"/>
<dbReference type="MGI" id="MGI:2179729">
    <property type="gene designation" value="Vwa1"/>
</dbReference>
<dbReference type="VEuPathDB" id="HostDB:ENSMUSG00000042116"/>
<dbReference type="eggNOG" id="KOG1217">
    <property type="taxonomic scope" value="Eukaryota"/>
</dbReference>
<dbReference type="eggNOG" id="KOG3544">
    <property type="taxonomic scope" value="Eukaryota"/>
</dbReference>
<dbReference type="GeneTree" id="ENSGT00940000160734"/>
<dbReference type="HOGENOM" id="CLU_042926_0_0_1"/>
<dbReference type="InParanoid" id="Q8R2Z5"/>
<dbReference type="OMA" id="WMLMCLL"/>
<dbReference type="OrthoDB" id="9949424at2759"/>
<dbReference type="PhylomeDB" id="Q8R2Z5"/>
<dbReference type="TreeFam" id="TF316402"/>
<dbReference type="Reactome" id="R-MMU-381426">
    <property type="pathway name" value="Regulation of Insulin-like Growth Factor (IGF) transport and uptake by Insulin-like Growth Factor Binding Proteins (IGFBPs)"/>
</dbReference>
<dbReference type="Reactome" id="R-MMU-8957275">
    <property type="pathway name" value="Post-translational protein phosphorylation"/>
</dbReference>
<dbReference type="BioGRID-ORCS" id="246228">
    <property type="hits" value="1 hit in 76 CRISPR screens"/>
</dbReference>
<dbReference type="ChiTaRS" id="Vwa1">
    <property type="organism name" value="mouse"/>
</dbReference>
<dbReference type="PRO" id="PR:Q8R2Z5"/>
<dbReference type="Proteomes" id="UP000000589">
    <property type="component" value="Chromosome 4"/>
</dbReference>
<dbReference type="RNAct" id="Q8R2Z5">
    <property type="molecule type" value="protein"/>
</dbReference>
<dbReference type="Bgee" id="ENSMUSG00000042116">
    <property type="expression patterns" value="Expressed in sciatic nerve and 157 other cell types or tissues"/>
</dbReference>
<dbReference type="GO" id="GO:0005604">
    <property type="term" value="C:basement membrane"/>
    <property type="evidence" value="ECO:0000314"/>
    <property type="project" value="MGI"/>
</dbReference>
<dbReference type="GO" id="GO:0062023">
    <property type="term" value="C:collagen-containing extracellular matrix"/>
    <property type="evidence" value="ECO:0007005"/>
    <property type="project" value="BHF-UCL"/>
</dbReference>
<dbReference type="GO" id="GO:0031012">
    <property type="term" value="C:extracellular matrix"/>
    <property type="evidence" value="ECO:0000314"/>
    <property type="project" value="MGI"/>
</dbReference>
<dbReference type="GO" id="GO:0005576">
    <property type="term" value="C:extracellular region"/>
    <property type="evidence" value="ECO:0000314"/>
    <property type="project" value="MGI"/>
</dbReference>
<dbReference type="GO" id="GO:0005614">
    <property type="term" value="C:interstitial matrix"/>
    <property type="evidence" value="ECO:0000314"/>
    <property type="project" value="MGI"/>
</dbReference>
<dbReference type="GO" id="GO:0042802">
    <property type="term" value="F:identical protein binding"/>
    <property type="evidence" value="ECO:0000314"/>
    <property type="project" value="MGI"/>
</dbReference>
<dbReference type="GO" id="GO:0050436">
    <property type="term" value="F:microfibril binding"/>
    <property type="evidence" value="ECO:0000314"/>
    <property type="project" value="MGI"/>
</dbReference>
<dbReference type="GO" id="GO:0042803">
    <property type="term" value="F:protein homodimerization activity"/>
    <property type="evidence" value="ECO:0000314"/>
    <property type="project" value="MGI"/>
</dbReference>
<dbReference type="GO" id="GO:0048266">
    <property type="term" value="P:behavioral response to pain"/>
    <property type="evidence" value="ECO:0000315"/>
    <property type="project" value="MGI"/>
</dbReference>
<dbReference type="GO" id="GO:0030198">
    <property type="term" value="P:extracellular matrix organization"/>
    <property type="evidence" value="ECO:0000314"/>
    <property type="project" value="MGI"/>
</dbReference>
<dbReference type="GO" id="GO:0051260">
    <property type="term" value="P:protein homooligomerization"/>
    <property type="evidence" value="ECO:0000314"/>
    <property type="project" value="MGI"/>
</dbReference>
<dbReference type="CDD" id="cd00063">
    <property type="entry name" value="FN3"/>
    <property type="match status" value="2"/>
</dbReference>
<dbReference type="CDD" id="cd01472">
    <property type="entry name" value="vWA_collagen"/>
    <property type="match status" value="1"/>
</dbReference>
<dbReference type="FunFam" id="2.60.40.10:FF:001442">
    <property type="entry name" value="von Willebrand factor A domain containing 1"/>
    <property type="match status" value="1"/>
</dbReference>
<dbReference type="FunFam" id="2.60.40.10:FF:000638">
    <property type="entry name" value="von Willebrand factor A domain-containing 1"/>
    <property type="match status" value="1"/>
</dbReference>
<dbReference type="FunFam" id="3.40.50.410:FF:000046">
    <property type="entry name" value="von Willebrand factor A domain-containing protein 1"/>
    <property type="match status" value="1"/>
</dbReference>
<dbReference type="Gene3D" id="2.60.40.10">
    <property type="entry name" value="Immunoglobulins"/>
    <property type="match status" value="2"/>
</dbReference>
<dbReference type="Gene3D" id="3.40.50.410">
    <property type="entry name" value="von Willebrand factor, type A domain"/>
    <property type="match status" value="1"/>
</dbReference>
<dbReference type="InterPro" id="IPR050525">
    <property type="entry name" value="ECM_Assembly_Org"/>
</dbReference>
<dbReference type="InterPro" id="IPR003961">
    <property type="entry name" value="FN3_dom"/>
</dbReference>
<dbReference type="InterPro" id="IPR036116">
    <property type="entry name" value="FN3_sf"/>
</dbReference>
<dbReference type="InterPro" id="IPR013783">
    <property type="entry name" value="Ig-like_fold"/>
</dbReference>
<dbReference type="InterPro" id="IPR002035">
    <property type="entry name" value="VWF_A"/>
</dbReference>
<dbReference type="InterPro" id="IPR036465">
    <property type="entry name" value="vWFA_dom_sf"/>
</dbReference>
<dbReference type="PANTHER" id="PTHR24020">
    <property type="entry name" value="COLLAGEN ALPHA"/>
    <property type="match status" value="1"/>
</dbReference>
<dbReference type="PANTHER" id="PTHR24020:SF77">
    <property type="entry name" value="VON WILLEBRAND FACTOR A DOMAIN-CONTAINING PROTEIN 1"/>
    <property type="match status" value="1"/>
</dbReference>
<dbReference type="Pfam" id="PF00041">
    <property type="entry name" value="fn3"/>
    <property type="match status" value="2"/>
</dbReference>
<dbReference type="Pfam" id="PF00092">
    <property type="entry name" value="VWA"/>
    <property type="match status" value="1"/>
</dbReference>
<dbReference type="PRINTS" id="PR00453">
    <property type="entry name" value="VWFADOMAIN"/>
</dbReference>
<dbReference type="SMART" id="SM00060">
    <property type="entry name" value="FN3"/>
    <property type="match status" value="2"/>
</dbReference>
<dbReference type="SMART" id="SM00327">
    <property type="entry name" value="VWA"/>
    <property type="match status" value="1"/>
</dbReference>
<dbReference type="SUPFAM" id="SSF49265">
    <property type="entry name" value="Fibronectin type III"/>
    <property type="match status" value="1"/>
</dbReference>
<dbReference type="SUPFAM" id="SSF53300">
    <property type="entry name" value="vWA-like"/>
    <property type="match status" value="1"/>
</dbReference>
<dbReference type="PROSITE" id="PS50853">
    <property type="entry name" value="FN3"/>
    <property type="match status" value="2"/>
</dbReference>
<dbReference type="PROSITE" id="PS50234">
    <property type="entry name" value="VWFA"/>
    <property type="match status" value="1"/>
</dbReference>
<gene>
    <name type="primary">Vwa1</name>
    <name type="synonym">Warp</name>
</gene>
<comment type="function">
    <text evidence="1 10">Promotes matrix assembly (PubMed:18757743). Involved in the organization of skeletal muscles and in the formation of neuromuscular junctions (By similarity).</text>
</comment>
<comment type="subunit">
    <text evidence="7 8">Homodimer or homomultimer; disulfide-linked. Interacts with HSPG2.</text>
</comment>
<comment type="subcellular location">
    <subcellularLocation>
        <location evidence="7 8 10">Secreted</location>
        <location evidence="7 8 10">Extracellular space</location>
        <location evidence="7 8 10">Extracellular matrix</location>
        <location evidence="7 8 10">Basement membrane</location>
    </subcellularLocation>
</comment>
<comment type="alternative products">
    <event type="alternative splicing"/>
    <isoform>
        <id>Q8R2Z5-1</id>
        <name>1</name>
        <sequence type="displayed"/>
    </isoform>
    <isoform>
        <id>Q8R2Z5-2</id>
        <name>2</name>
        <sequence type="described" ref="VSP_028618"/>
    </isoform>
</comment>
<comment type="tissue specificity">
    <text evidence="7 9">Expressed at high levels in the chondrocytes. Detected in the vasculature of neural tissues, in basement membrane structures of the peripheral nervous system, in the apical ectodermal ridge of developing limb buds, and in skeletal and cardiac muscle (at protein level).</text>
</comment>
<comment type="developmental stage">
    <text evidence="8 9 10">Restricted to the presumptive articular cartilage zone prior to joint cavitation and to the articular cartilage and fibrocartilaginous elements in the joint, spine and sternum during embryonic development. Detected from 9.5 dpc in the vasculature of the central nervous system. At 16.5 dpc, present in intervertebral disks of the spinal cord, lip epithelium and developing oral and tooth germ epithelia (at protein level).</text>
</comment>
<comment type="PTM">
    <text evidence="7">N-glycosylated.</text>
</comment>